<gene>
    <name type="ordered locus">Ent638_1581</name>
</gene>
<accession>A4W980</accession>
<comment type="similarity">
    <text evidence="1">Belongs to the UPF0502 family.</text>
</comment>
<proteinExistence type="inferred from homology"/>
<evidence type="ECO:0000255" key="1">
    <source>
        <dbReference type="HAMAP-Rule" id="MF_01584"/>
    </source>
</evidence>
<dbReference type="EMBL" id="CP000653">
    <property type="protein sequence ID" value="ABP60260.1"/>
    <property type="molecule type" value="Genomic_DNA"/>
</dbReference>
<dbReference type="RefSeq" id="WP_012016977.1">
    <property type="nucleotide sequence ID" value="NC_009436.1"/>
</dbReference>
<dbReference type="SMR" id="A4W980"/>
<dbReference type="STRING" id="399742.Ent638_1581"/>
<dbReference type="KEGG" id="ent:Ent638_1581"/>
<dbReference type="eggNOG" id="COG3132">
    <property type="taxonomic scope" value="Bacteria"/>
</dbReference>
<dbReference type="HOGENOM" id="CLU_057831_2_0_6"/>
<dbReference type="OrthoDB" id="9784785at2"/>
<dbReference type="Proteomes" id="UP000000230">
    <property type="component" value="Chromosome"/>
</dbReference>
<dbReference type="Gene3D" id="1.10.10.10">
    <property type="entry name" value="Winged helix-like DNA-binding domain superfamily/Winged helix DNA-binding domain"/>
    <property type="match status" value="2"/>
</dbReference>
<dbReference type="HAMAP" id="MF_01584">
    <property type="entry name" value="UPF0502"/>
    <property type="match status" value="1"/>
</dbReference>
<dbReference type="InterPro" id="IPR007432">
    <property type="entry name" value="DUF480"/>
</dbReference>
<dbReference type="InterPro" id="IPR036388">
    <property type="entry name" value="WH-like_DNA-bd_sf"/>
</dbReference>
<dbReference type="InterPro" id="IPR036390">
    <property type="entry name" value="WH_DNA-bd_sf"/>
</dbReference>
<dbReference type="NCBIfam" id="NF008413">
    <property type="entry name" value="PRK11239.1"/>
    <property type="match status" value="1"/>
</dbReference>
<dbReference type="PANTHER" id="PTHR38768">
    <property type="entry name" value="UPF0502 PROTEIN YCEH"/>
    <property type="match status" value="1"/>
</dbReference>
<dbReference type="PANTHER" id="PTHR38768:SF1">
    <property type="entry name" value="UPF0502 PROTEIN YCEH"/>
    <property type="match status" value="1"/>
</dbReference>
<dbReference type="Pfam" id="PF04337">
    <property type="entry name" value="DUF480"/>
    <property type="match status" value="1"/>
</dbReference>
<dbReference type="SUPFAM" id="SSF46785">
    <property type="entry name" value="Winged helix' DNA-binding domain"/>
    <property type="match status" value="2"/>
</dbReference>
<feature type="chain" id="PRO_1000069296" description="UPF0502 protein Ent638_1581">
    <location>
        <begin position="1"/>
        <end position="216"/>
    </location>
</feature>
<reference key="1">
    <citation type="journal article" date="2010" name="PLoS Genet.">
        <title>Genome sequence of the plant growth promoting endophytic bacterium Enterobacter sp. 638.</title>
        <authorList>
            <person name="Taghavi S."/>
            <person name="van der Lelie D."/>
            <person name="Hoffman A."/>
            <person name="Zhang Y.B."/>
            <person name="Walla M.D."/>
            <person name="Vangronsveld J."/>
            <person name="Newman L."/>
            <person name="Monchy S."/>
        </authorList>
    </citation>
    <scope>NUCLEOTIDE SEQUENCE [LARGE SCALE GENOMIC DNA]</scope>
    <source>
        <strain>638</strain>
    </source>
</reference>
<organism>
    <name type="scientific">Enterobacter sp. (strain 638)</name>
    <dbReference type="NCBI Taxonomy" id="399742"/>
    <lineage>
        <taxon>Bacteria</taxon>
        <taxon>Pseudomonadati</taxon>
        <taxon>Pseudomonadota</taxon>
        <taxon>Gammaproteobacteria</taxon>
        <taxon>Enterobacterales</taxon>
        <taxon>Enterobacteriaceae</taxon>
        <taxon>Enterobacter</taxon>
    </lineage>
</organism>
<protein>
    <recommendedName>
        <fullName evidence="1">UPF0502 protein Ent638_1581</fullName>
    </recommendedName>
</protein>
<sequence>MKYQLTATEARVIGCLLEKQVTTPEQYPLSVNAVTLACNQKSNREPVLNLSEHDVQDHLDALVKRHYLRTVSGFGNRVTKYEQRFCNSEFGDLKFSSAEVAIVTTLLLRGAQTPGELRSRASRMHEFSDMQEVEQTLENLASREDGPFVMRLPREPGKRESRFMHLFSGDVETLVNVAEAVSPVEDESLAARVDALETEVAELKQRLDSLLAHLGE</sequence>
<name>Y1581_ENT38</name>